<accession>A6WVA7</accession>
<dbReference type="EMBL" id="CP000758">
    <property type="protein sequence ID" value="ABS12911.1"/>
    <property type="molecule type" value="Genomic_DNA"/>
</dbReference>
<dbReference type="RefSeq" id="WP_010658013.1">
    <property type="nucleotide sequence ID" value="NC_009667.1"/>
</dbReference>
<dbReference type="SMR" id="A6WVA7"/>
<dbReference type="STRING" id="439375.Oant_0180"/>
<dbReference type="GeneID" id="61316404"/>
<dbReference type="KEGG" id="oan:Oant_0180"/>
<dbReference type="eggNOG" id="COG0576">
    <property type="taxonomic scope" value="Bacteria"/>
</dbReference>
<dbReference type="HOGENOM" id="CLU_057217_6_2_5"/>
<dbReference type="PhylomeDB" id="A6WVA7"/>
<dbReference type="Proteomes" id="UP000002301">
    <property type="component" value="Chromosome 1"/>
</dbReference>
<dbReference type="GO" id="GO:0005737">
    <property type="term" value="C:cytoplasm"/>
    <property type="evidence" value="ECO:0007669"/>
    <property type="project" value="UniProtKB-SubCell"/>
</dbReference>
<dbReference type="GO" id="GO:0000774">
    <property type="term" value="F:adenyl-nucleotide exchange factor activity"/>
    <property type="evidence" value="ECO:0007669"/>
    <property type="project" value="InterPro"/>
</dbReference>
<dbReference type="GO" id="GO:0042803">
    <property type="term" value="F:protein homodimerization activity"/>
    <property type="evidence" value="ECO:0007669"/>
    <property type="project" value="InterPro"/>
</dbReference>
<dbReference type="GO" id="GO:0051087">
    <property type="term" value="F:protein-folding chaperone binding"/>
    <property type="evidence" value="ECO:0007669"/>
    <property type="project" value="InterPro"/>
</dbReference>
<dbReference type="GO" id="GO:0051082">
    <property type="term" value="F:unfolded protein binding"/>
    <property type="evidence" value="ECO:0007669"/>
    <property type="project" value="TreeGrafter"/>
</dbReference>
<dbReference type="GO" id="GO:0006457">
    <property type="term" value="P:protein folding"/>
    <property type="evidence" value="ECO:0007669"/>
    <property type="project" value="InterPro"/>
</dbReference>
<dbReference type="CDD" id="cd00446">
    <property type="entry name" value="GrpE"/>
    <property type="match status" value="1"/>
</dbReference>
<dbReference type="FunFam" id="2.30.22.10:FF:000001">
    <property type="entry name" value="Protein GrpE"/>
    <property type="match status" value="1"/>
</dbReference>
<dbReference type="Gene3D" id="3.90.20.20">
    <property type="match status" value="1"/>
</dbReference>
<dbReference type="Gene3D" id="2.30.22.10">
    <property type="entry name" value="Head domain of nucleotide exchange factor GrpE"/>
    <property type="match status" value="1"/>
</dbReference>
<dbReference type="HAMAP" id="MF_01151">
    <property type="entry name" value="GrpE"/>
    <property type="match status" value="1"/>
</dbReference>
<dbReference type="InterPro" id="IPR000740">
    <property type="entry name" value="GrpE"/>
</dbReference>
<dbReference type="InterPro" id="IPR013805">
    <property type="entry name" value="GrpE_coiled_coil"/>
</dbReference>
<dbReference type="InterPro" id="IPR009012">
    <property type="entry name" value="GrpE_head"/>
</dbReference>
<dbReference type="NCBIfam" id="NF010737">
    <property type="entry name" value="PRK14139.1"/>
    <property type="match status" value="1"/>
</dbReference>
<dbReference type="NCBIfam" id="NF010738">
    <property type="entry name" value="PRK14140.1"/>
    <property type="match status" value="1"/>
</dbReference>
<dbReference type="NCBIfam" id="NF010739">
    <property type="entry name" value="PRK14141.1"/>
    <property type="match status" value="1"/>
</dbReference>
<dbReference type="NCBIfam" id="NF010748">
    <property type="entry name" value="PRK14150.1"/>
    <property type="match status" value="1"/>
</dbReference>
<dbReference type="PANTHER" id="PTHR21237">
    <property type="entry name" value="GRPE PROTEIN"/>
    <property type="match status" value="1"/>
</dbReference>
<dbReference type="PANTHER" id="PTHR21237:SF23">
    <property type="entry name" value="GRPE PROTEIN HOMOLOG, MITOCHONDRIAL"/>
    <property type="match status" value="1"/>
</dbReference>
<dbReference type="Pfam" id="PF01025">
    <property type="entry name" value="GrpE"/>
    <property type="match status" value="1"/>
</dbReference>
<dbReference type="PRINTS" id="PR00773">
    <property type="entry name" value="GRPEPROTEIN"/>
</dbReference>
<dbReference type="SUPFAM" id="SSF58014">
    <property type="entry name" value="Coiled-coil domain of nucleotide exchange factor GrpE"/>
    <property type="match status" value="1"/>
</dbReference>
<dbReference type="SUPFAM" id="SSF51064">
    <property type="entry name" value="Head domain of nucleotide exchange factor GrpE"/>
    <property type="match status" value="1"/>
</dbReference>
<dbReference type="PROSITE" id="PS01071">
    <property type="entry name" value="GRPE"/>
    <property type="match status" value="1"/>
</dbReference>
<organism>
    <name type="scientific">Brucella anthropi (strain ATCC 49188 / DSM 6882 / CCUG 24695 / JCM 21032 / LMG 3331 / NBRC 15819 / NCTC 12168 / Alc 37)</name>
    <name type="common">Ochrobactrum anthropi</name>
    <dbReference type="NCBI Taxonomy" id="439375"/>
    <lineage>
        <taxon>Bacteria</taxon>
        <taxon>Pseudomonadati</taxon>
        <taxon>Pseudomonadota</taxon>
        <taxon>Alphaproteobacteria</taxon>
        <taxon>Hyphomicrobiales</taxon>
        <taxon>Brucellaceae</taxon>
        <taxon>Brucella/Ochrobactrum group</taxon>
        <taxon>Brucella</taxon>
    </lineage>
</organism>
<proteinExistence type="inferred from homology"/>
<gene>
    <name evidence="1" type="primary">grpE</name>
    <name type="ordered locus">Oant_0180</name>
</gene>
<evidence type="ECO:0000255" key="1">
    <source>
        <dbReference type="HAMAP-Rule" id="MF_01151"/>
    </source>
</evidence>
<evidence type="ECO:0000256" key="2">
    <source>
        <dbReference type="SAM" id="MobiDB-lite"/>
    </source>
</evidence>
<name>GRPE_BRUA4</name>
<feature type="chain" id="PRO_1000053610" description="Protein GrpE">
    <location>
        <begin position="1"/>
        <end position="228"/>
    </location>
</feature>
<feature type="region of interest" description="Disordered" evidence="2">
    <location>
        <begin position="1"/>
        <end position="31"/>
    </location>
</feature>
<feature type="region of interest" description="Disordered" evidence="2">
    <location>
        <begin position="209"/>
        <end position="228"/>
    </location>
</feature>
<keyword id="KW-0143">Chaperone</keyword>
<keyword id="KW-0963">Cytoplasm</keyword>
<keyword id="KW-1185">Reference proteome</keyword>
<keyword id="KW-0346">Stress response</keyword>
<reference key="1">
    <citation type="journal article" date="2011" name="J. Bacteriol.">
        <title>Genome of Ochrobactrum anthropi ATCC 49188 T, a versatile opportunistic pathogen and symbiont of several eukaryotic hosts.</title>
        <authorList>
            <person name="Chain P.S."/>
            <person name="Lang D.M."/>
            <person name="Comerci D.J."/>
            <person name="Malfatti S.A."/>
            <person name="Vergez L.M."/>
            <person name="Shin M."/>
            <person name="Ugalde R.A."/>
            <person name="Garcia E."/>
            <person name="Tolmasky M.E."/>
        </authorList>
    </citation>
    <scope>NUCLEOTIDE SEQUENCE [LARGE SCALE GENOMIC DNA]</scope>
    <source>
        <strain>ATCC 49188 / DSM 6882 / CCUG 24695 / JCM 21032 / LMG 3331 / NBRC 15819 / NCTC 12168 / Alc 37</strain>
    </source>
</reference>
<sequence>MADEKNKSQNPDLEQRDINNPRDREALNRAADDFLKARKAEARAEVAEDEAEAAVDETANRIAMLEADNGELKDQLLRAAAEMENLRKRTQRDVQDARTYAVTNFARDMLSVSDNLRRALDAIPADALATDASLKSLADGVEMTERAMLQALERHGVKKLEPEGEKFDPNFHQAMFEVPNPDLPNNTVVQVVQDGYAIGDRVLRPAMVGVSKGGPKATADNGASEGNG</sequence>
<comment type="function">
    <text evidence="1">Participates actively in the response to hyperosmotic and heat shock by preventing the aggregation of stress-denatured proteins, in association with DnaK and GrpE. It is the nucleotide exchange factor for DnaK and may function as a thermosensor. Unfolded proteins bind initially to DnaJ; upon interaction with the DnaJ-bound protein, DnaK hydrolyzes its bound ATP, resulting in the formation of a stable complex. GrpE releases ADP from DnaK; ATP binding to DnaK triggers the release of the substrate protein, thus completing the reaction cycle. Several rounds of ATP-dependent interactions between DnaJ, DnaK and GrpE are required for fully efficient folding.</text>
</comment>
<comment type="subunit">
    <text evidence="1">Homodimer.</text>
</comment>
<comment type="subcellular location">
    <subcellularLocation>
        <location evidence="1">Cytoplasm</location>
    </subcellularLocation>
</comment>
<comment type="similarity">
    <text evidence="1">Belongs to the GrpE family.</text>
</comment>
<protein>
    <recommendedName>
        <fullName evidence="1">Protein GrpE</fullName>
    </recommendedName>
    <alternativeName>
        <fullName evidence="1">HSP-70 cofactor</fullName>
    </alternativeName>
</protein>